<proteinExistence type="inferred from homology"/>
<organism>
    <name type="scientific">Bacillus anthracis (strain A0248)</name>
    <dbReference type="NCBI Taxonomy" id="592021"/>
    <lineage>
        <taxon>Bacteria</taxon>
        <taxon>Bacillati</taxon>
        <taxon>Bacillota</taxon>
        <taxon>Bacilli</taxon>
        <taxon>Bacillales</taxon>
        <taxon>Bacillaceae</taxon>
        <taxon>Bacillus</taxon>
        <taxon>Bacillus cereus group</taxon>
    </lineage>
</organism>
<keyword id="KW-0067">ATP-binding</keyword>
<keyword id="KW-0436">Ligase</keyword>
<keyword id="KW-0460">Magnesium</keyword>
<keyword id="KW-0479">Metal-binding</keyword>
<keyword id="KW-0547">Nucleotide-binding</keyword>
<keyword id="KW-0816">Tricarboxylic acid cycle</keyword>
<dbReference type="EC" id="6.2.1.5" evidence="1"/>
<dbReference type="EMBL" id="CP001598">
    <property type="protein sequence ID" value="ACQ50435.1"/>
    <property type="molecule type" value="Genomic_DNA"/>
</dbReference>
<dbReference type="RefSeq" id="WP_001020786.1">
    <property type="nucleotide sequence ID" value="NC_012659.1"/>
</dbReference>
<dbReference type="SMR" id="C3P5N7"/>
<dbReference type="GeneID" id="45023664"/>
<dbReference type="KEGG" id="bai:BAA_3997"/>
<dbReference type="HOGENOM" id="CLU_037430_0_2_9"/>
<dbReference type="UniPathway" id="UPA00223">
    <property type="reaction ID" value="UER00999"/>
</dbReference>
<dbReference type="GO" id="GO:0005829">
    <property type="term" value="C:cytosol"/>
    <property type="evidence" value="ECO:0007669"/>
    <property type="project" value="TreeGrafter"/>
</dbReference>
<dbReference type="GO" id="GO:0042709">
    <property type="term" value="C:succinate-CoA ligase complex"/>
    <property type="evidence" value="ECO:0007669"/>
    <property type="project" value="TreeGrafter"/>
</dbReference>
<dbReference type="GO" id="GO:0005524">
    <property type="term" value="F:ATP binding"/>
    <property type="evidence" value="ECO:0007669"/>
    <property type="project" value="UniProtKB-UniRule"/>
</dbReference>
<dbReference type="GO" id="GO:0000287">
    <property type="term" value="F:magnesium ion binding"/>
    <property type="evidence" value="ECO:0007669"/>
    <property type="project" value="UniProtKB-UniRule"/>
</dbReference>
<dbReference type="GO" id="GO:0004775">
    <property type="term" value="F:succinate-CoA ligase (ADP-forming) activity"/>
    <property type="evidence" value="ECO:0007669"/>
    <property type="project" value="UniProtKB-UniRule"/>
</dbReference>
<dbReference type="GO" id="GO:0004776">
    <property type="term" value="F:succinate-CoA ligase (GDP-forming) activity"/>
    <property type="evidence" value="ECO:0007669"/>
    <property type="project" value="RHEA"/>
</dbReference>
<dbReference type="GO" id="GO:0006104">
    <property type="term" value="P:succinyl-CoA metabolic process"/>
    <property type="evidence" value="ECO:0007669"/>
    <property type="project" value="TreeGrafter"/>
</dbReference>
<dbReference type="GO" id="GO:0006099">
    <property type="term" value="P:tricarboxylic acid cycle"/>
    <property type="evidence" value="ECO:0007669"/>
    <property type="project" value="UniProtKB-UniRule"/>
</dbReference>
<dbReference type="FunFam" id="3.30.1490.20:FF:000002">
    <property type="entry name" value="Succinate--CoA ligase [ADP-forming] subunit beta"/>
    <property type="match status" value="1"/>
</dbReference>
<dbReference type="FunFam" id="3.30.470.20:FF:000002">
    <property type="entry name" value="Succinate--CoA ligase [ADP-forming] subunit beta"/>
    <property type="match status" value="1"/>
</dbReference>
<dbReference type="FunFam" id="3.40.50.261:FF:000001">
    <property type="entry name" value="Succinate--CoA ligase [ADP-forming] subunit beta"/>
    <property type="match status" value="1"/>
</dbReference>
<dbReference type="Gene3D" id="3.30.1490.20">
    <property type="entry name" value="ATP-grasp fold, A domain"/>
    <property type="match status" value="1"/>
</dbReference>
<dbReference type="Gene3D" id="3.30.470.20">
    <property type="entry name" value="ATP-grasp fold, B domain"/>
    <property type="match status" value="1"/>
</dbReference>
<dbReference type="Gene3D" id="3.40.50.261">
    <property type="entry name" value="Succinyl-CoA synthetase domains"/>
    <property type="match status" value="1"/>
</dbReference>
<dbReference type="HAMAP" id="MF_00558">
    <property type="entry name" value="Succ_CoA_beta"/>
    <property type="match status" value="1"/>
</dbReference>
<dbReference type="InterPro" id="IPR011761">
    <property type="entry name" value="ATP-grasp"/>
</dbReference>
<dbReference type="InterPro" id="IPR013650">
    <property type="entry name" value="ATP-grasp_succ-CoA_synth-type"/>
</dbReference>
<dbReference type="InterPro" id="IPR013815">
    <property type="entry name" value="ATP_grasp_subdomain_1"/>
</dbReference>
<dbReference type="InterPro" id="IPR005811">
    <property type="entry name" value="SUCC_ACL_C"/>
</dbReference>
<dbReference type="InterPro" id="IPR005809">
    <property type="entry name" value="Succ_CoA_ligase-like_bsu"/>
</dbReference>
<dbReference type="InterPro" id="IPR016102">
    <property type="entry name" value="Succinyl-CoA_synth-like"/>
</dbReference>
<dbReference type="NCBIfam" id="NF001913">
    <property type="entry name" value="PRK00696.1"/>
    <property type="match status" value="1"/>
</dbReference>
<dbReference type="NCBIfam" id="TIGR01016">
    <property type="entry name" value="sucCoAbeta"/>
    <property type="match status" value="1"/>
</dbReference>
<dbReference type="PANTHER" id="PTHR11815:SF10">
    <property type="entry name" value="SUCCINATE--COA LIGASE [GDP-FORMING] SUBUNIT BETA, MITOCHONDRIAL"/>
    <property type="match status" value="1"/>
</dbReference>
<dbReference type="PANTHER" id="PTHR11815">
    <property type="entry name" value="SUCCINYL-COA SYNTHETASE BETA CHAIN"/>
    <property type="match status" value="1"/>
</dbReference>
<dbReference type="Pfam" id="PF08442">
    <property type="entry name" value="ATP-grasp_2"/>
    <property type="match status" value="1"/>
</dbReference>
<dbReference type="Pfam" id="PF00549">
    <property type="entry name" value="Ligase_CoA"/>
    <property type="match status" value="1"/>
</dbReference>
<dbReference type="PIRSF" id="PIRSF001554">
    <property type="entry name" value="SucCS_beta"/>
    <property type="match status" value="1"/>
</dbReference>
<dbReference type="SUPFAM" id="SSF56059">
    <property type="entry name" value="Glutathione synthetase ATP-binding domain-like"/>
    <property type="match status" value="1"/>
</dbReference>
<dbReference type="SUPFAM" id="SSF52210">
    <property type="entry name" value="Succinyl-CoA synthetase domains"/>
    <property type="match status" value="1"/>
</dbReference>
<dbReference type="PROSITE" id="PS50975">
    <property type="entry name" value="ATP_GRASP"/>
    <property type="match status" value="1"/>
</dbReference>
<comment type="function">
    <text evidence="1">Succinyl-CoA synthetase functions in the citric acid cycle (TCA), coupling the hydrolysis of succinyl-CoA to the synthesis of either ATP or GTP and thus represents the only step of substrate-level phosphorylation in the TCA. The beta subunit provides nucleotide specificity of the enzyme and binds the substrate succinate, while the binding sites for coenzyme A and phosphate are found in the alpha subunit.</text>
</comment>
<comment type="catalytic activity">
    <reaction evidence="1">
        <text>succinate + ATP + CoA = succinyl-CoA + ADP + phosphate</text>
        <dbReference type="Rhea" id="RHEA:17661"/>
        <dbReference type="ChEBI" id="CHEBI:30031"/>
        <dbReference type="ChEBI" id="CHEBI:30616"/>
        <dbReference type="ChEBI" id="CHEBI:43474"/>
        <dbReference type="ChEBI" id="CHEBI:57287"/>
        <dbReference type="ChEBI" id="CHEBI:57292"/>
        <dbReference type="ChEBI" id="CHEBI:456216"/>
        <dbReference type="EC" id="6.2.1.5"/>
    </reaction>
    <physiologicalReaction direction="right-to-left" evidence="1">
        <dbReference type="Rhea" id="RHEA:17663"/>
    </physiologicalReaction>
</comment>
<comment type="catalytic activity">
    <reaction evidence="1">
        <text>GTP + succinate + CoA = succinyl-CoA + GDP + phosphate</text>
        <dbReference type="Rhea" id="RHEA:22120"/>
        <dbReference type="ChEBI" id="CHEBI:30031"/>
        <dbReference type="ChEBI" id="CHEBI:37565"/>
        <dbReference type="ChEBI" id="CHEBI:43474"/>
        <dbReference type="ChEBI" id="CHEBI:57287"/>
        <dbReference type="ChEBI" id="CHEBI:57292"/>
        <dbReference type="ChEBI" id="CHEBI:58189"/>
    </reaction>
    <physiologicalReaction direction="right-to-left" evidence="1">
        <dbReference type="Rhea" id="RHEA:22122"/>
    </physiologicalReaction>
</comment>
<comment type="cofactor">
    <cofactor evidence="1">
        <name>Mg(2+)</name>
        <dbReference type="ChEBI" id="CHEBI:18420"/>
    </cofactor>
    <text evidence="1">Binds 1 Mg(2+) ion per subunit.</text>
</comment>
<comment type="pathway">
    <text evidence="1">Carbohydrate metabolism; tricarboxylic acid cycle; succinate from succinyl-CoA (ligase route): step 1/1.</text>
</comment>
<comment type="subunit">
    <text evidence="1">Heterotetramer of two alpha and two beta subunits.</text>
</comment>
<comment type="similarity">
    <text evidence="1">Belongs to the succinate/malate CoA ligase beta subunit family.</text>
</comment>
<name>SUCC_BACAA</name>
<evidence type="ECO:0000255" key="1">
    <source>
        <dbReference type="HAMAP-Rule" id="MF_00558"/>
    </source>
</evidence>
<feature type="chain" id="PRO_1000197694" description="Succinate--CoA ligase [ADP-forming] subunit beta">
    <location>
        <begin position="1"/>
        <end position="386"/>
    </location>
</feature>
<feature type="domain" description="ATP-grasp" evidence="1">
    <location>
        <begin position="9"/>
        <end position="244"/>
    </location>
</feature>
<feature type="binding site" evidence="1">
    <location>
        <position position="46"/>
    </location>
    <ligand>
        <name>ATP</name>
        <dbReference type="ChEBI" id="CHEBI:30616"/>
    </ligand>
</feature>
<feature type="binding site" evidence="1">
    <location>
        <begin position="53"/>
        <end position="55"/>
    </location>
    <ligand>
        <name>ATP</name>
        <dbReference type="ChEBI" id="CHEBI:30616"/>
    </ligand>
</feature>
<feature type="binding site" evidence="1">
    <location>
        <position position="99"/>
    </location>
    <ligand>
        <name>ATP</name>
        <dbReference type="ChEBI" id="CHEBI:30616"/>
    </ligand>
</feature>
<feature type="binding site" evidence="1">
    <location>
        <position position="102"/>
    </location>
    <ligand>
        <name>ATP</name>
        <dbReference type="ChEBI" id="CHEBI:30616"/>
    </ligand>
</feature>
<feature type="binding site" evidence="1">
    <location>
        <position position="107"/>
    </location>
    <ligand>
        <name>ATP</name>
        <dbReference type="ChEBI" id="CHEBI:30616"/>
    </ligand>
</feature>
<feature type="binding site" evidence="1">
    <location>
        <position position="199"/>
    </location>
    <ligand>
        <name>Mg(2+)</name>
        <dbReference type="ChEBI" id="CHEBI:18420"/>
    </ligand>
</feature>
<feature type="binding site" evidence="1">
    <location>
        <position position="213"/>
    </location>
    <ligand>
        <name>Mg(2+)</name>
        <dbReference type="ChEBI" id="CHEBI:18420"/>
    </ligand>
</feature>
<feature type="binding site" evidence="1">
    <location>
        <position position="264"/>
    </location>
    <ligand>
        <name>substrate</name>
        <note>ligand shared with subunit alpha</note>
    </ligand>
</feature>
<feature type="binding site" evidence="1">
    <location>
        <begin position="321"/>
        <end position="323"/>
    </location>
    <ligand>
        <name>substrate</name>
        <note>ligand shared with subunit alpha</note>
    </ligand>
</feature>
<protein>
    <recommendedName>
        <fullName evidence="1">Succinate--CoA ligase [ADP-forming] subunit beta</fullName>
        <ecNumber evidence="1">6.2.1.5</ecNumber>
    </recommendedName>
    <alternativeName>
        <fullName evidence="1">Succinyl-CoA synthetase subunit beta</fullName>
        <shortName evidence="1">SCS-beta</shortName>
    </alternativeName>
</protein>
<reference key="1">
    <citation type="submission" date="2009-04" db="EMBL/GenBank/DDBJ databases">
        <title>Genome sequence of Bacillus anthracis A0248.</title>
        <authorList>
            <person name="Dodson R.J."/>
            <person name="Munk A.C."/>
            <person name="Bruce D."/>
            <person name="Detter C."/>
            <person name="Tapia R."/>
            <person name="Sutton G."/>
            <person name="Sims D."/>
            <person name="Brettin T."/>
        </authorList>
    </citation>
    <scope>NUCLEOTIDE SEQUENCE [LARGE SCALE GENOMIC DNA]</scope>
    <source>
        <strain>A0248</strain>
    </source>
</reference>
<sequence>MNIHEYQGKAVLRSYGVSVPNGKVAFTVEEAVEAAKELGTDVCVVKAQIHAGGRGKAGGVKVAKNLDEVRTYAESILGTTLVTHQTGPEGKEVKRLLIEEGCDIKKEYYVGLVLDRATSQVVLMASEEGGTEIEEVAEKTPEKIFKEYIDPAVGLQGFQARRIAFNINIPKELVGQAVKFMMGLYRAFIEKDCSIAEINPLVTTGDGKVMALDAKLNFDSNALYRHKDILELRDLDEEDAKEIEASKYDLNYIPLDGNIGCMVNGAGLAMATMDIIKHYHGDPANFLDVGGGATAEKVTEAFKIILSDKNVKGIFVNIFGGIMKCDVIAEGVIEATKQVGLELPLVVRLEGTNVELGKKILNESGLNIVAAESMTDGAQKIVSLVG</sequence>
<accession>C3P5N7</accession>
<gene>
    <name evidence="1" type="primary">sucC</name>
    <name type="ordered locus">BAA_3997</name>
</gene>